<accession>A5U3R6</accession>
<evidence type="ECO:0000255" key="1">
    <source>
        <dbReference type="HAMAP-Rule" id="MF_00518"/>
    </source>
</evidence>
<protein>
    <recommendedName>
        <fullName evidence="1">D-aminoacyl-tRNA deacylase</fullName>
        <shortName evidence="1">DTD</shortName>
        <ecNumber evidence="1">3.1.1.96</ecNumber>
    </recommendedName>
    <alternativeName>
        <fullName evidence="1">Gly-tRNA(Ala) deacylase</fullName>
    </alternativeName>
</protein>
<gene>
    <name evidence="1" type="primary">dtd</name>
    <name type="ordered locus">MRA_1909</name>
</gene>
<proteinExistence type="inferred from homology"/>
<dbReference type="EC" id="3.1.1.96" evidence="1"/>
<dbReference type="EMBL" id="CP000611">
    <property type="protein sequence ID" value="ABQ73666.1"/>
    <property type="molecule type" value="Genomic_DNA"/>
</dbReference>
<dbReference type="RefSeq" id="WP_003409533.1">
    <property type="nucleotide sequence ID" value="NZ_CP016972.1"/>
</dbReference>
<dbReference type="SMR" id="A5U3R6"/>
<dbReference type="KEGG" id="mra:MRA_1909"/>
<dbReference type="eggNOG" id="COG1490">
    <property type="taxonomic scope" value="Bacteria"/>
</dbReference>
<dbReference type="HOGENOM" id="CLU_076901_1_2_11"/>
<dbReference type="Proteomes" id="UP000001988">
    <property type="component" value="Chromosome"/>
</dbReference>
<dbReference type="GO" id="GO:0005737">
    <property type="term" value="C:cytoplasm"/>
    <property type="evidence" value="ECO:0007669"/>
    <property type="project" value="UniProtKB-SubCell"/>
</dbReference>
<dbReference type="GO" id="GO:0051500">
    <property type="term" value="F:D-tyrosyl-tRNA(Tyr) deacylase activity"/>
    <property type="evidence" value="ECO:0007669"/>
    <property type="project" value="TreeGrafter"/>
</dbReference>
<dbReference type="GO" id="GO:0106026">
    <property type="term" value="F:Gly-tRNA(Ala) deacylase activity"/>
    <property type="evidence" value="ECO:0007669"/>
    <property type="project" value="UniProtKB-UniRule"/>
</dbReference>
<dbReference type="GO" id="GO:0043908">
    <property type="term" value="F:Ser(Gly)-tRNA(Ala) hydrolase activity"/>
    <property type="evidence" value="ECO:0007669"/>
    <property type="project" value="UniProtKB-UniRule"/>
</dbReference>
<dbReference type="GO" id="GO:0000049">
    <property type="term" value="F:tRNA binding"/>
    <property type="evidence" value="ECO:0007669"/>
    <property type="project" value="UniProtKB-UniRule"/>
</dbReference>
<dbReference type="GO" id="GO:0019478">
    <property type="term" value="P:D-amino acid catabolic process"/>
    <property type="evidence" value="ECO:0007669"/>
    <property type="project" value="UniProtKB-UniRule"/>
</dbReference>
<dbReference type="CDD" id="cd00563">
    <property type="entry name" value="Dtyr_deacylase"/>
    <property type="match status" value="1"/>
</dbReference>
<dbReference type="FunFam" id="3.50.80.10:FF:000002">
    <property type="entry name" value="D-aminoacyl-tRNA deacylase"/>
    <property type="match status" value="1"/>
</dbReference>
<dbReference type="Gene3D" id="3.50.80.10">
    <property type="entry name" value="D-tyrosyl-tRNA(Tyr) deacylase"/>
    <property type="match status" value="1"/>
</dbReference>
<dbReference type="HAMAP" id="MF_00518">
    <property type="entry name" value="Deacylase_Dtd"/>
    <property type="match status" value="1"/>
</dbReference>
<dbReference type="InterPro" id="IPR003732">
    <property type="entry name" value="Daa-tRNA_deacyls_DTD"/>
</dbReference>
<dbReference type="InterPro" id="IPR023509">
    <property type="entry name" value="DTD-like_sf"/>
</dbReference>
<dbReference type="NCBIfam" id="TIGR00256">
    <property type="entry name" value="D-aminoacyl-tRNA deacylase"/>
    <property type="match status" value="1"/>
</dbReference>
<dbReference type="PANTHER" id="PTHR10472:SF5">
    <property type="entry name" value="D-AMINOACYL-TRNA DEACYLASE 1"/>
    <property type="match status" value="1"/>
</dbReference>
<dbReference type="PANTHER" id="PTHR10472">
    <property type="entry name" value="D-TYROSYL-TRNA TYR DEACYLASE"/>
    <property type="match status" value="1"/>
</dbReference>
<dbReference type="Pfam" id="PF02580">
    <property type="entry name" value="Tyr_Deacylase"/>
    <property type="match status" value="1"/>
</dbReference>
<dbReference type="SUPFAM" id="SSF69500">
    <property type="entry name" value="DTD-like"/>
    <property type="match status" value="1"/>
</dbReference>
<comment type="function">
    <text evidence="1">An aminoacyl-tRNA editing enzyme that deacylates mischarged D-aminoacyl-tRNAs. Also deacylates mischarged glycyl-tRNA(Ala), protecting cells against glycine mischarging by AlaRS. Acts via tRNA-based rather than protein-based catalysis; rejects L-amino acids rather than detecting D-amino acids in the active site. By recycling D-aminoacyl-tRNA to D-amino acids and free tRNA molecules, this enzyme counteracts the toxicity associated with the formation of D-aminoacyl-tRNA entities in vivo and helps enforce protein L-homochirality.</text>
</comment>
<comment type="catalytic activity">
    <reaction evidence="1">
        <text>glycyl-tRNA(Ala) + H2O = tRNA(Ala) + glycine + H(+)</text>
        <dbReference type="Rhea" id="RHEA:53744"/>
        <dbReference type="Rhea" id="RHEA-COMP:9657"/>
        <dbReference type="Rhea" id="RHEA-COMP:13640"/>
        <dbReference type="ChEBI" id="CHEBI:15377"/>
        <dbReference type="ChEBI" id="CHEBI:15378"/>
        <dbReference type="ChEBI" id="CHEBI:57305"/>
        <dbReference type="ChEBI" id="CHEBI:78442"/>
        <dbReference type="ChEBI" id="CHEBI:78522"/>
        <dbReference type="EC" id="3.1.1.96"/>
    </reaction>
</comment>
<comment type="catalytic activity">
    <reaction evidence="1">
        <text>a D-aminoacyl-tRNA + H2O = a tRNA + a D-alpha-amino acid + H(+)</text>
        <dbReference type="Rhea" id="RHEA:13953"/>
        <dbReference type="Rhea" id="RHEA-COMP:10123"/>
        <dbReference type="Rhea" id="RHEA-COMP:10124"/>
        <dbReference type="ChEBI" id="CHEBI:15377"/>
        <dbReference type="ChEBI" id="CHEBI:15378"/>
        <dbReference type="ChEBI" id="CHEBI:59871"/>
        <dbReference type="ChEBI" id="CHEBI:78442"/>
        <dbReference type="ChEBI" id="CHEBI:79333"/>
        <dbReference type="EC" id="3.1.1.96"/>
    </reaction>
</comment>
<comment type="subunit">
    <text evidence="1">Homodimer.</text>
</comment>
<comment type="subcellular location">
    <subcellularLocation>
        <location evidence="1">Cytoplasm</location>
    </subcellularLocation>
</comment>
<comment type="domain">
    <text evidence="1">A Gly-cisPro motif from one monomer fits into the active site of the other monomer to allow specific chiral rejection of L-amino acids.</text>
</comment>
<comment type="similarity">
    <text evidence="1">Belongs to the DTD family.</text>
</comment>
<reference key="1">
    <citation type="journal article" date="2008" name="PLoS ONE">
        <title>Genetic basis of virulence attenuation revealed by comparative genomic analysis of Mycobacterium tuberculosis strain H37Ra versus H37Rv.</title>
        <authorList>
            <person name="Zheng H."/>
            <person name="Lu L."/>
            <person name="Wang B."/>
            <person name="Pu S."/>
            <person name="Zhang X."/>
            <person name="Zhu G."/>
            <person name="Shi W."/>
            <person name="Zhang L."/>
            <person name="Wang H."/>
            <person name="Wang S."/>
            <person name="Zhao G."/>
            <person name="Zhang Y."/>
        </authorList>
    </citation>
    <scope>NUCLEOTIDE SEQUENCE [LARGE SCALE GENOMIC DNA]</scope>
    <source>
        <strain>ATCC 25177 / H37Ra</strain>
    </source>
</reference>
<name>DTD_MYCTA</name>
<feature type="chain" id="PRO_1000050857" description="D-aminoacyl-tRNA deacylase">
    <location>
        <begin position="1"/>
        <end position="143"/>
    </location>
</feature>
<feature type="short sequence motif" description="Gly-cisPro motif, important for rejection of L-amino acids" evidence="1">
    <location>
        <begin position="135"/>
        <end position="136"/>
    </location>
</feature>
<organism>
    <name type="scientific">Mycobacterium tuberculosis (strain ATCC 25177 / H37Ra)</name>
    <dbReference type="NCBI Taxonomy" id="419947"/>
    <lineage>
        <taxon>Bacteria</taxon>
        <taxon>Bacillati</taxon>
        <taxon>Actinomycetota</taxon>
        <taxon>Actinomycetes</taxon>
        <taxon>Mycobacteriales</taxon>
        <taxon>Mycobacteriaceae</taxon>
        <taxon>Mycobacterium</taxon>
        <taxon>Mycobacterium tuberculosis complex</taxon>
    </lineage>
</organism>
<sequence>MRVLVQRVSSAAVRVDGRVVGAIRPDGQGLVAFVGVTHGDDLDKARRLAEKLWNLRVLADEKSASDMHAPILVISQFTLYADTAKGRRPSWNAAAPGAVAQPLIAAFAAALRQLGAHVEAGVFGAHMQVELVNDGPVTVMLEG</sequence>
<keyword id="KW-0963">Cytoplasm</keyword>
<keyword id="KW-0378">Hydrolase</keyword>
<keyword id="KW-1185">Reference proteome</keyword>
<keyword id="KW-0694">RNA-binding</keyword>
<keyword id="KW-0820">tRNA-binding</keyword>